<proteinExistence type="inferred from homology"/>
<dbReference type="EC" id="3.1.3.77" evidence="1"/>
<dbReference type="EMBL" id="CH940652">
    <property type="protein sequence ID" value="EDW59685.1"/>
    <property type="molecule type" value="Genomic_DNA"/>
</dbReference>
<dbReference type="SMR" id="B4M4X4"/>
<dbReference type="FunCoup" id="B4M4X4">
    <property type="interactions" value="2078"/>
</dbReference>
<dbReference type="STRING" id="7244.B4M4X4"/>
<dbReference type="EnsemblMetazoa" id="FBtr0226941">
    <property type="protein sequence ID" value="FBpp0225433"/>
    <property type="gene ID" value="FBgn0198283"/>
</dbReference>
<dbReference type="EnsemblMetazoa" id="XM_002056537.3">
    <property type="protein sequence ID" value="XP_002056573.1"/>
    <property type="gene ID" value="LOC6632956"/>
</dbReference>
<dbReference type="GeneID" id="6632956"/>
<dbReference type="KEGG" id="dvi:6632956"/>
<dbReference type="CTD" id="40630"/>
<dbReference type="eggNOG" id="KOG2630">
    <property type="taxonomic scope" value="Eukaryota"/>
</dbReference>
<dbReference type="HOGENOM" id="CLU_023273_0_0_1"/>
<dbReference type="InParanoid" id="B4M4X4"/>
<dbReference type="OMA" id="LQGMVWE"/>
<dbReference type="OrthoDB" id="272500at2759"/>
<dbReference type="PhylomeDB" id="B4M4X4"/>
<dbReference type="UniPathway" id="UPA00904">
    <property type="reaction ID" value="UER00876"/>
</dbReference>
<dbReference type="UniPathway" id="UPA00904">
    <property type="reaction ID" value="UER00877"/>
</dbReference>
<dbReference type="Proteomes" id="UP000008792">
    <property type="component" value="Unassembled WGS sequence"/>
</dbReference>
<dbReference type="GO" id="GO:0005737">
    <property type="term" value="C:cytoplasm"/>
    <property type="evidence" value="ECO:0007669"/>
    <property type="project" value="UniProtKB-SubCell"/>
</dbReference>
<dbReference type="GO" id="GO:0005634">
    <property type="term" value="C:nucleus"/>
    <property type="evidence" value="ECO:0007669"/>
    <property type="project" value="UniProtKB-SubCell"/>
</dbReference>
<dbReference type="GO" id="GO:0043874">
    <property type="term" value="F:acireductone synthase activity"/>
    <property type="evidence" value="ECO:0007669"/>
    <property type="project" value="UniProtKB-EC"/>
</dbReference>
<dbReference type="GO" id="GO:0000287">
    <property type="term" value="F:magnesium ion binding"/>
    <property type="evidence" value="ECO:0007669"/>
    <property type="project" value="UniProtKB-UniRule"/>
</dbReference>
<dbReference type="GO" id="GO:0019509">
    <property type="term" value="P:L-methionine salvage from methylthioadenosine"/>
    <property type="evidence" value="ECO:0007669"/>
    <property type="project" value="UniProtKB-UniRule"/>
</dbReference>
<dbReference type="CDD" id="cd01629">
    <property type="entry name" value="HAD_EP"/>
    <property type="match status" value="1"/>
</dbReference>
<dbReference type="Gene3D" id="1.10.720.60">
    <property type="match status" value="1"/>
</dbReference>
<dbReference type="Gene3D" id="3.40.50.1000">
    <property type="entry name" value="HAD superfamily/HAD-like"/>
    <property type="match status" value="1"/>
</dbReference>
<dbReference type="HAMAP" id="MF_01681">
    <property type="entry name" value="Salvage_MtnC"/>
    <property type="match status" value="1"/>
</dbReference>
<dbReference type="HAMAP" id="MF_03117">
    <property type="entry name" value="Salvage_MtnC_euk"/>
    <property type="match status" value="1"/>
</dbReference>
<dbReference type="InterPro" id="IPR023943">
    <property type="entry name" value="Enolase-ppase_E1"/>
</dbReference>
<dbReference type="InterPro" id="IPR027511">
    <property type="entry name" value="ENOPH1_eukaryotes"/>
</dbReference>
<dbReference type="InterPro" id="IPR036412">
    <property type="entry name" value="HAD-like_sf"/>
</dbReference>
<dbReference type="InterPro" id="IPR006439">
    <property type="entry name" value="HAD-SF_hydro_IA"/>
</dbReference>
<dbReference type="InterPro" id="IPR023214">
    <property type="entry name" value="HAD_sf"/>
</dbReference>
<dbReference type="NCBIfam" id="TIGR01691">
    <property type="entry name" value="enolase-ppase"/>
    <property type="match status" value="1"/>
</dbReference>
<dbReference type="PANTHER" id="PTHR20371">
    <property type="entry name" value="ENOLASE-PHOSPHATASE E1"/>
    <property type="match status" value="1"/>
</dbReference>
<dbReference type="PANTHER" id="PTHR20371:SF1">
    <property type="entry name" value="ENOLASE-PHOSPHATASE E1"/>
    <property type="match status" value="1"/>
</dbReference>
<dbReference type="Pfam" id="PF00702">
    <property type="entry name" value="Hydrolase"/>
    <property type="match status" value="1"/>
</dbReference>
<dbReference type="PRINTS" id="PR00413">
    <property type="entry name" value="HADHALOGNASE"/>
</dbReference>
<dbReference type="SFLD" id="SFLDF00044">
    <property type="entry name" value="enolase-phosphatase"/>
    <property type="match status" value="1"/>
</dbReference>
<dbReference type="SFLD" id="SFLDS00003">
    <property type="entry name" value="Haloacid_Dehalogenase"/>
    <property type="match status" value="1"/>
</dbReference>
<dbReference type="SUPFAM" id="SSF56784">
    <property type="entry name" value="HAD-like"/>
    <property type="match status" value="1"/>
</dbReference>
<comment type="function">
    <text evidence="1">Bifunctional enzyme that catalyzes the enolization of 2,3-diketo-5-methylthiopentyl-1-phosphate (DK-MTP-1-P) into the intermediate 2-hydroxy-3-keto-5-methylthiopentenyl-1-phosphate (HK-MTPenyl-1-P), which is then dephosphorylated to form the acireductone 1,2-dihydroxy-3-keto-5-methylthiopentene (DHK-MTPene).</text>
</comment>
<comment type="catalytic activity">
    <reaction evidence="1">
        <text>5-methylsulfanyl-2,3-dioxopentyl phosphate + H2O = 1,2-dihydroxy-5-(methylsulfanyl)pent-1-en-3-one + phosphate</text>
        <dbReference type="Rhea" id="RHEA:21700"/>
        <dbReference type="ChEBI" id="CHEBI:15377"/>
        <dbReference type="ChEBI" id="CHEBI:43474"/>
        <dbReference type="ChEBI" id="CHEBI:49252"/>
        <dbReference type="ChEBI" id="CHEBI:58828"/>
        <dbReference type="EC" id="3.1.3.77"/>
    </reaction>
</comment>
<comment type="cofactor">
    <cofactor evidence="1">
        <name>Mg(2+)</name>
        <dbReference type="ChEBI" id="CHEBI:18420"/>
    </cofactor>
    <text evidence="1">Binds 1 Mg(2+) ion per subunit.</text>
</comment>
<comment type="pathway">
    <text evidence="1">Amino-acid biosynthesis; L-methionine biosynthesis via salvage pathway; L-methionine from S-methyl-5-thio-alpha-D-ribose 1-phosphate: step 3/6.</text>
</comment>
<comment type="pathway">
    <text evidence="1">Amino-acid biosynthesis; L-methionine biosynthesis via salvage pathway; L-methionine from S-methyl-5-thio-alpha-D-ribose 1-phosphate: step 4/6.</text>
</comment>
<comment type="subunit">
    <text evidence="1">Monomer.</text>
</comment>
<comment type="subcellular location">
    <subcellularLocation>
        <location evidence="1">Cytoplasm</location>
    </subcellularLocation>
    <subcellularLocation>
        <location evidence="1">Nucleus</location>
    </subcellularLocation>
</comment>
<comment type="similarity">
    <text evidence="1">Belongs to the HAD-like hydrolase superfamily. MasA/MtnC family.</text>
</comment>
<name>ENOPH_DROVI</name>
<organism>
    <name type="scientific">Drosophila virilis</name>
    <name type="common">Fruit fly</name>
    <dbReference type="NCBI Taxonomy" id="7244"/>
    <lineage>
        <taxon>Eukaryota</taxon>
        <taxon>Metazoa</taxon>
        <taxon>Ecdysozoa</taxon>
        <taxon>Arthropoda</taxon>
        <taxon>Hexapoda</taxon>
        <taxon>Insecta</taxon>
        <taxon>Pterygota</taxon>
        <taxon>Neoptera</taxon>
        <taxon>Endopterygota</taxon>
        <taxon>Diptera</taxon>
        <taxon>Brachycera</taxon>
        <taxon>Muscomorpha</taxon>
        <taxon>Ephydroidea</taxon>
        <taxon>Drosophilidae</taxon>
        <taxon>Drosophila</taxon>
    </lineage>
</organism>
<evidence type="ECO:0000255" key="1">
    <source>
        <dbReference type="HAMAP-Rule" id="MF_03117"/>
    </source>
</evidence>
<sequence length="249" mass="27596">MTIPDLTAKVVLVDIEGTTTSISFVHEVLFPYAKQNAEHYLLETWETDATKQIVQDLQLLPQFAEYASTLGTQPAVDAQLIAGFVRYLIERDLKVTPLKTLQGLIWAKGYASGQLRGHVYEDVATAFHTWREAGLRIAVYSSGSVAAQKLIFQHSIAGDLLPHLSAHFDTHVGHKQQTESYTKISQILQVEPQHVLFLTDVPLEAAAARAAGMLTILLQRPGNVPLSEEERSSYPVVEDFVALHTLKQP</sequence>
<reference key="1">
    <citation type="journal article" date="2007" name="Nature">
        <title>Evolution of genes and genomes on the Drosophila phylogeny.</title>
        <authorList>
            <consortium name="Drosophila 12 genomes consortium"/>
        </authorList>
    </citation>
    <scope>NUCLEOTIDE SEQUENCE [LARGE SCALE GENOMIC DNA]</scope>
    <source>
        <strain>Tucson 15010-1051.87</strain>
    </source>
</reference>
<keyword id="KW-0028">Amino-acid biosynthesis</keyword>
<keyword id="KW-0963">Cytoplasm</keyword>
<keyword id="KW-0378">Hydrolase</keyword>
<keyword id="KW-0460">Magnesium</keyword>
<keyword id="KW-0479">Metal-binding</keyword>
<keyword id="KW-0486">Methionine biosynthesis</keyword>
<keyword id="KW-0539">Nucleus</keyword>
<keyword id="KW-1185">Reference proteome</keyword>
<accession>B4M4X4</accession>
<gene>
    <name type="ORF">GJ11016</name>
</gene>
<feature type="chain" id="PRO_0000393985" description="Enolase-phosphatase E1">
    <location>
        <begin position="1"/>
        <end position="249"/>
    </location>
</feature>
<feature type="binding site" evidence="1">
    <location>
        <position position="14"/>
    </location>
    <ligand>
        <name>Mg(2+)</name>
        <dbReference type="ChEBI" id="CHEBI:18420"/>
    </ligand>
</feature>
<feature type="binding site" evidence="1">
    <location>
        <position position="16"/>
    </location>
    <ligand>
        <name>Mg(2+)</name>
        <dbReference type="ChEBI" id="CHEBI:18420"/>
    </ligand>
</feature>
<feature type="binding site" evidence="1">
    <location>
        <begin position="141"/>
        <end position="142"/>
    </location>
    <ligand>
        <name>substrate</name>
    </ligand>
</feature>
<feature type="binding site" evidence="1">
    <location>
        <position position="175"/>
    </location>
    <ligand>
        <name>substrate</name>
    </ligand>
</feature>
<feature type="binding site" evidence="1">
    <location>
        <position position="200"/>
    </location>
    <ligand>
        <name>Mg(2+)</name>
        <dbReference type="ChEBI" id="CHEBI:18420"/>
    </ligand>
</feature>
<protein>
    <recommendedName>
        <fullName evidence="1">Enolase-phosphatase E1</fullName>
        <ecNumber evidence="1">3.1.3.77</ecNumber>
    </recommendedName>
    <alternativeName>
        <fullName evidence="1">2,3-diketo-5-methylthio-1-phosphopentane phosphatase</fullName>
    </alternativeName>
</protein>